<name>TIG_SACD2</name>
<keyword id="KW-0131">Cell cycle</keyword>
<keyword id="KW-0132">Cell division</keyword>
<keyword id="KW-0143">Chaperone</keyword>
<keyword id="KW-0963">Cytoplasm</keyword>
<keyword id="KW-0413">Isomerase</keyword>
<keyword id="KW-1185">Reference proteome</keyword>
<keyword id="KW-0697">Rotamase</keyword>
<protein>
    <recommendedName>
        <fullName evidence="1">Trigger factor</fullName>
        <shortName evidence="1">TF</shortName>
        <ecNumber evidence="1">5.2.1.8</ecNumber>
    </recommendedName>
    <alternativeName>
        <fullName evidence="1">PPIase</fullName>
    </alternativeName>
</protein>
<accession>Q21KB0</accession>
<comment type="function">
    <text evidence="1">Involved in protein export. Acts as a chaperone by maintaining the newly synthesized protein in an open conformation. Functions as a peptidyl-prolyl cis-trans isomerase.</text>
</comment>
<comment type="catalytic activity">
    <reaction evidence="1">
        <text>[protein]-peptidylproline (omega=180) = [protein]-peptidylproline (omega=0)</text>
        <dbReference type="Rhea" id="RHEA:16237"/>
        <dbReference type="Rhea" id="RHEA-COMP:10747"/>
        <dbReference type="Rhea" id="RHEA-COMP:10748"/>
        <dbReference type="ChEBI" id="CHEBI:83833"/>
        <dbReference type="ChEBI" id="CHEBI:83834"/>
        <dbReference type="EC" id="5.2.1.8"/>
    </reaction>
</comment>
<comment type="subcellular location">
    <subcellularLocation>
        <location>Cytoplasm</location>
    </subcellularLocation>
    <text evidence="1">About half TF is bound to the ribosome near the polypeptide exit tunnel while the other half is free in the cytoplasm.</text>
</comment>
<comment type="domain">
    <text evidence="1">Consists of 3 domains; the N-terminus binds the ribosome, the middle domain has PPIase activity, while the C-terminus has intrinsic chaperone activity on its own.</text>
</comment>
<comment type="similarity">
    <text evidence="1">Belongs to the FKBP-type PPIase family. Tig subfamily.</text>
</comment>
<proteinExistence type="inferred from homology"/>
<reference key="1">
    <citation type="journal article" date="2008" name="PLoS Genet.">
        <title>Complete genome sequence of the complex carbohydrate-degrading marine bacterium, Saccharophagus degradans strain 2-40 T.</title>
        <authorList>
            <person name="Weiner R.M."/>
            <person name="Taylor L.E. II"/>
            <person name="Henrissat B."/>
            <person name="Hauser L."/>
            <person name="Land M."/>
            <person name="Coutinho P.M."/>
            <person name="Rancurel C."/>
            <person name="Saunders E.H."/>
            <person name="Longmire A.G."/>
            <person name="Zhang H."/>
            <person name="Bayer E.A."/>
            <person name="Gilbert H.J."/>
            <person name="Larimer F."/>
            <person name="Zhulin I.B."/>
            <person name="Ekborg N.A."/>
            <person name="Lamed R."/>
            <person name="Richardson P.M."/>
            <person name="Borovok I."/>
            <person name="Hutcheson S."/>
        </authorList>
    </citation>
    <scope>NUCLEOTIDE SEQUENCE [LARGE SCALE GENOMIC DNA]</scope>
    <source>
        <strain>2-40 / ATCC 43961 / DSM 17024</strain>
    </source>
</reference>
<sequence>MQVSLETTTGLERKLTVGIPASVVDQEVAKRLKEAAKTVRINGFRKGKVPMSVVQQRYGAGVRQEVLGDAINRSFYDAVRKESLRPAGQPAIEPKQLEPGKDIEFVATFEVYPEIEVSGLESIEVTRYNAEVTDADVDTMIETLQKSQADWAPVKRKSKKGDRVVIDFKGTKDGEAFEGGTAEGQTLVLGSNSMIPGFEKGIIGMKAGETETIKVTFPDDYQEESLRGAEAEFEVTVQKVEGQKLPKLDDEFFAKFGVTEGGEEKFRADVRENMEREKQKALKGKLKEQVMNGLVAANTVDIPKSLVSGEIDALRNQMGNQMMQQYGSQAEGIDFKSILPDDMFKEQAERRVALGLIVSEIVKNEKISVDKELVKSLIEDVASTYEHPEEVVNYYYGNEQLLGGVEAAALEEQVVSLVLSKAKVSDETISYEEAVKPAAKQAEE</sequence>
<organism>
    <name type="scientific">Saccharophagus degradans (strain 2-40 / ATCC 43961 / DSM 17024)</name>
    <dbReference type="NCBI Taxonomy" id="203122"/>
    <lineage>
        <taxon>Bacteria</taxon>
        <taxon>Pseudomonadati</taxon>
        <taxon>Pseudomonadota</taxon>
        <taxon>Gammaproteobacteria</taxon>
        <taxon>Cellvibrionales</taxon>
        <taxon>Cellvibrionaceae</taxon>
        <taxon>Saccharophagus</taxon>
    </lineage>
</organism>
<feature type="chain" id="PRO_0000256612" description="Trigger factor">
    <location>
        <begin position="1"/>
        <end position="444"/>
    </location>
</feature>
<feature type="domain" description="PPIase FKBP-type" evidence="1">
    <location>
        <begin position="161"/>
        <end position="246"/>
    </location>
</feature>
<gene>
    <name evidence="1" type="primary">tig</name>
    <name type="ordered locus">Sde_1607</name>
</gene>
<evidence type="ECO:0000255" key="1">
    <source>
        <dbReference type="HAMAP-Rule" id="MF_00303"/>
    </source>
</evidence>
<dbReference type="EC" id="5.2.1.8" evidence="1"/>
<dbReference type="EMBL" id="CP000282">
    <property type="protein sequence ID" value="ABD80869.1"/>
    <property type="molecule type" value="Genomic_DNA"/>
</dbReference>
<dbReference type="RefSeq" id="WP_011468089.1">
    <property type="nucleotide sequence ID" value="NC_007912.1"/>
</dbReference>
<dbReference type="SMR" id="Q21KB0"/>
<dbReference type="STRING" id="203122.Sde_1607"/>
<dbReference type="GeneID" id="98613285"/>
<dbReference type="KEGG" id="sde:Sde_1607"/>
<dbReference type="eggNOG" id="COG0544">
    <property type="taxonomic scope" value="Bacteria"/>
</dbReference>
<dbReference type="HOGENOM" id="CLU_033058_2_0_6"/>
<dbReference type="OrthoDB" id="9767721at2"/>
<dbReference type="Proteomes" id="UP000001947">
    <property type="component" value="Chromosome"/>
</dbReference>
<dbReference type="GO" id="GO:0005737">
    <property type="term" value="C:cytoplasm"/>
    <property type="evidence" value="ECO:0007669"/>
    <property type="project" value="UniProtKB-SubCell"/>
</dbReference>
<dbReference type="GO" id="GO:0003755">
    <property type="term" value="F:peptidyl-prolyl cis-trans isomerase activity"/>
    <property type="evidence" value="ECO:0007669"/>
    <property type="project" value="UniProtKB-UniRule"/>
</dbReference>
<dbReference type="GO" id="GO:0044183">
    <property type="term" value="F:protein folding chaperone"/>
    <property type="evidence" value="ECO:0007669"/>
    <property type="project" value="TreeGrafter"/>
</dbReference>
<dbReference type="GO" id="GO:0043022">
    <property type="term" value="F:ribosome binding"/>
    <property type="evidence" value="ECO:0007669"/>
    <property type="project" value="TreeGrafter"/>
</dbReference>
<dbReference type="GO" id="GO:0051083">
    <property type="term" value="P:'de novo' cotranslational protein folding"/>
    <property type="evidence" value="ECO:0007669"/>
    <property type="project" value="TreeGrafter"/>
</dbReference>
<dbReference type="GO" id="GO:0051301">
    <property type="term" value="P:cell division"/>
    <property type="evidence" value="ECO:0007669"/>
    <property type="project" value="UniProtKB-KW"/>
</dbReference>
<dbReference type="GO" id="GO:0061077">
    <property type="term" value="P:chaperone-mediated protein folding"/>
    <property type="evidence" value="ECO:0007669"/>
    <property type="project" value="TreeGrafter"/>
</dbReference>
<dbReference type="GO" id="GO:0015031">
    <property type="term" value="P:protein transport"/>
    <property type="evidence" value="ECO:0007669"/>
    <property type="project" value="UniProtKB-UniRule"/>
</dbReference>
<dbReference type="GO" id="GO:0043335">
    <property type="term" value="P:protein unfolding"/>
    <property type="evidence" value="ECO:0007669"/>
    <property type="project" value="TreeGrafter"/>
</dbReference>
<dbReference type="FunFam" id="3.10.50.40:FF:000001">
    <property type="entry name" value="Trigger factor"/>
    <property type="match status" value="1"/>
</dbReference>
<dbReference type="Gene3D" id="3.10.50.40">
    <property type="match status" value="1"/>
</dbReference>
<dbReference type="Gene3D" id="3.30.70.1050">
    <property type="entry name" value="Trigger factor ribosome-binding domain"/>
    <property type="match status" value="1"/>
</dbReference>
<dbReference type="Gene3D" id="1.10.3120.10">
    <property type="entry name" value="Trigger factor, C-terminal domain"/>
    <property type="match status" value="1"/>
</dbReference>
<dbReference type="HAMAP" id="MF_00303">
    <property type="entry name" value="Trigger_factor_Tig"/>
    <property type="match status" value="1"/>
</dbReference>
<dbReference type="InterPro" id="IPR046357">
    <property type="entry name" value="PPIase_dom_sf"/>
</dbReference>
<dbReference type="InterPro" id="IPR001179">
    <property type="entry name" value="PPIase_FKBP_dom"/>
</dbReference>
<dbReference type="InterPro" id="IPR005215">
    <property type="entry name" value="Trig_fac"/>
</dbReference>
<dbReference type="InterPro" id="IPR008880">
    <property type="entry name" value="Trigger_fac_C"/>
</dbReference>
<dbReference type="InterPro" id="IPR037041">
    <property type="entry name" value="Trigger_fac_C_sf"/>
</dbReference>
<dbReference type="InterPro" id="IPR008881">
    <property type="entry name" value="Trigger_fac_ribosome-bd_bac"/>
</dbReference>
<dbReference type="InterPro" id="IPR036611">
    <property type="entry name" value="Trigger_fac_ribosome-bd_sf"/>
</dbReference>
<dbReference type="InterPro" id="IPR027304">
    <property type="entry name" value="Trigger_fact/SurA_dom_sf"/>
</dbReference>
<dbReference type="NCBIfam" id="TIGR00115">
    <property type="entry name" value="tig"/>
    <property type="match status" value="1"/>
</dbReference>
<dbReference type="PANTHER" id="PTHR30560">
    <property type="entry name" value="TRIGGER FACTOR CHAPERONE AND PEPTIDYL-PROLYL CIS/TRANS ISOMERASE"/>
    <property type="match status" value="1"/>
</dbReference>
<dbReference type="PANTHER" id="PTHR30560:SF3">
    <property type="entry name" value="TRIGGER FACTOR-LIKE PROTEIN TIG, CHLOROPLASTIC"/>
    <property type="match status" value="1"/>
</dbReference>
<dbReference type="Pfam" id="PF00254">
    <property type="entry name" value="FKBP_C"/>
    <property type="match status" value="1"/>
</dbReference>
<dbReference type="Pfam" id="PF05698">
    <property type="entry name" value="Trigger_C"/>
    <property type="match status" value="1"/>
</dbReference>
<dbReference type="Pfam" id="PF05697">
    <property type="entry name" value="Trigger_N"/>
    <property type="match status" value="1"/>
</dbReference>
<dbReference type="PIRSF" id="PIRSF003095">
    <property type="entry name" value="Trigger_factor"/>
    <property type="match status" value="1"/>
</dbReference>
<dbReference type="SUPFAM" id="SSF54534">
    <property type="entry name" value="FKBP-like"/>
    <property type="match status" value="1"/>
</dbReference>
<dbReference type="SUPFAM" id="SSF109998">
    <property type="entry name" value="Triger factor/SurA peptide-binding domain-like"/>
    <property type="match status" value="1"/>
</dbReference>
<dbReference type="SUPFAM" id="SSF102735">
    <property type="entry name" value="Trigger factor ribosome-binding domain"/>
    <property type="match status" value="1"/>
</dbReference>
<dbReference type="PROSITE" id="PS50059">
    <property type="entry name" value="FKBP_PPIASE"/>
    <property type="match status" value="1"/>
</dbReference>